<protein>
    <recommendedName>
        <fullName evidence="1">Glutamyl-tRNA(Gln) amidotransferase subunit A</fullName>
        <shortName evidence="1">Glu-ADT subunit A</shortName>
        <ecNumber evidence="1">6.3.5.7</ecNumber>
    </recommendedName>
</protein>
<dbReference type="EC" id="6.3.5.7" evidence="1"/>
<dbReference type="EMBL" id="CR936503">
    <property type="protein sequence ID" value="CAI55854.1"/>
    <property type="molecule type" value="Genomic_DNA"/>
</dbReference>
<dbReference type="RefSeq" id="WP_011375242.1">
    <property type="nucleotide sequence ID" value="NC_007576.1"/>
</dbReference>
<dbReference type="SMR" id="Q38VC9"/>
<dbReference type="STRING" id="314315.LCA_1547"/>
<dbReference type="KEGG" id="lsa:LCA_1547"/>
<dbReference type="eggNOG" id="COG0154">
    <property type="taxonomic scope" value="Bacteria"/>
</dbReference>
<dbReference type="HOGENOM" id="CLU_009600_0_3_9"/>
<dbReference type="OrthoDB" id="9811471at2"/>
<dbReference type="Proteomes" id="UP000002707">
    <property type="component" value="Chromosome"/>
</dbReference>
<dbReference type="GO" id="GO:0030956">
    <property type="term" value="C:glutamyl-tRNA(Gln) amidotransferase complex"/>
    <property type="evidence" value="ECO:0007669"/>
    <property type="project" value="InterPro"/>
</dbReference>
<dbReference type="GO" id="GO:0005524">
    <property type="term" value="F:ATP binding"/>
    <property type="evidence" value="ECO:0007669"/>
    <property type="project" value="UniProtKB-KW"/>
</dbReference>
<dbReference type="GO" id="GO:0050567">
    <property type="term" value="F:glutaminyl-tRNA synthase (glutamine-hydrolyzing) activity"/>
    <property type="evidence" value="ECO:0007669"/>
    <property type="project" value="UniProtKB-UniRule"/>
</dbReference>
<dbReference type="GO" id="GO:0006412">
    <property type="term" value="P:translation"/>
    <property type="evidence" value="ECO:0007669"/>
    <property type="project" value="UniProtKB-UniRule"/>
</dbReference>
<dbReference type="Gene3D" id="3.90.1300.10">
    <property type="entry name" value="Amidase signature (AS) domain"/>
    <property type="match status" value="1"/>
</dbReference>
<dbReference type="HAMAP" id="MF_00120">
    <property type="entry name" value="GatA"/>
    <property type="match status" value="1"/>
</dbReference>
<dbReference type="InterPro" id="IPR000120">
    <property type="entry name" value="Amidase"/>
</dbReference>
<dbReference type="InterPro" id="IPR020556">
    <property type="entry name" value="Amidase_CS"/>
</dbReference>
<dbReference type="InterPro" id="IPR023631">
    <property type="entry name" value="Amidase_dom"/>
</dbReference>
<dbReference type="InterPro" id="IPR036928">
    <property type="entry name" value="AS_sf"/>
</dbReference>
<dbReference type="InterPro" id="IPR004412">
    <property type="entry name" value="GatA"/>
</dbReference>
<dbReference type="NCBIfam" id="TIGR00132">
    <property type="entry name" value="gatA"/>
    <property type="match status" value="1"/>
</dbReference>
<dbReference type="PANTHER" id="PTHR11895:SF151">
    <property type="entry name" value="GLUTAMYL-TRNA(GLN) AMIDOTRANSFERASE SUBUNIT A"/>
    <property type="match status" value="1"/>
</dbReference>
<dbReference type="PANTHER" id="PTHR11895">
    <property type="entry name" value="TRANSAMIDASE"/>
    <property type="match status" value="1"/>
</dbReference>
<dbReference type="Pfam" id="PF01425">
    <property type="entry name" value="Amidase"/>
    <property type="match status" value="1"/>
</dbReference>
<dbReference type="SUPFAM" id="SSF75304">
    <property type="entry name" value="Amidase signature (AS) enzymes"/>
    <property type="match status" value="1"/>
</dbReference>
<dbReference type="PROSITE" id="PS00571">
    <property type="entry name" value="AMIDASES"/>
    <property type="match status" value="1"/>
</dbReference>
<keyword id="KW-0067">ATP-binding</keyword>
<keyword id="KW-0436">Ligase</keyword>
<keyword id="KW-0547">Nucleotide-binding</keyword>
<keyword id="KW-0648">Protein biosynthesis</keyword>
<keyword id="KW-1185">Reference proteome</keyword>
<organism>
    <name type="scientific">Latilactobacillus sakei subsp. sakei (strain 23K)</name>
    <name type="common">Lactobacillus sakei subsp. sakei</name>
    <dbReference type="NCBI Taxonomy" id="314315"/>
    <lineage>
        <taxon>Bacteria</taxon>
        <taxon>Bacillati</taxon>
        <taxon>Bacillota</taxon>
        <taxon>Bacilli</taxon>
        <taxon>Lactobacillales</taxon>
        <taxon>Lactobacillaceae</taxon>
        <taxon>Latilactobacillus</taxon>
    </lineage>
</organism>
<proteinExistence type="inferred from homology"/>
<name>GATA_LATSS</name>
<gene>
    <name evidence="1" type="primary">gatA</name>
    <name type="ordered locus">LCA_1547</name>
</gene>
<comment type="function">
    <text evidence="1">Allows the formation of correctly charged Gln-tRNA(Gln) through the transamidation of misacylated Glu-tRNA(Gln) in organisms which lack glutaminyl-tRNA synthetase. The reaction takes place in the presence of glutamine and ATP through an activated gamma-phospho-Glu-tRNA(Gln).</text>
</comment>
<comment type="catalytic activity">
    <reaction evidence="1">
        <text>L-glutamyl-tRNA(Gln) + L-glutamine + ATP + H2O = L-glutaminyl-tRNA(Gln) + L-glutamate + ADP + phosphate + H(+)</text>
        <dbReference type="Rhea" id="RHEA:17521"/>
        <dbReference type="Rhea" id="RHEA-COMP:9681"/>
        <dbReference type="Rhea" id="RHEA-COMP:9684"/>
        <dbReference type="ChEBI" id="CHEBI:15377"/>
        <dbReference type="ChEBI" id="CHEBI:15378"/>
        <dbReference type="ChEBI" id="CHEBI:29985"/>
        <dbReference type="ChEBI" id="CHEBI:30616"/>
        <dbReference type="ChEBI" id="CHEBI:43474"/>
        <dbReference type="ChEBI" id="CHEBI:58359"/>
        <dbReference type="ChEBI" id="CHEBI:78520"/>
        <dbReference type="ChEBI" id="CHEBI:78521"/>
        <dbReference type="ChEBI" id="CHEBI:456216"/>
        <dbReference type="EC" id="6.3.5.7"/>
    </reaction>
</comment>
<comment type="subunit">
    <text evidence="1">Heterotrimer of A, B and C subunits.</text>
</comment>
<comment type="similarity">
    <text evidence="1">Belongs to the amidase family. GatA subfamily.</text>
</comment>
<accession>Q38VC9</accession>
<evidence type="ECO:0000255" key="1">
    <source>
        <dbReference type="HAMAP-Rule" id="MF_00120"/>
    </source>
</evidence>
<sequence>MDYLNEDLQSVHDKLVAGDLTASQLVTDTLETIKTKEQQVDAFLTIDEKGAQEAAAKIDAQPIDADNLLAGMPIGIKDNLLTDGVTTTAASKMLANFKPVFDATVVEKLKAKKAIMIGKTNLDEFAMGSSTETSAFKKTKNPWDLDKVPGGSSGGSAAAVAAGEVVAALGTDTGGSIRQPAAFNGIVGIKPTYGRVSRWGAIAFASSLDQVGVFSRTVADNATVLQAISGHDEKDSTSADYEVPDFRAALNGDIKGMKIAVAKEYMAEGVEPAVKAQIETAIETFKSLGATVEEVSLPHSQYAVQTYYIIASSEASSNLSRFDGIRYGYRSPEAKTLEDVYVKSRSEGFGDEVKRRIMLGTFALSSGFYDAYFKKAGQMRTLIIQDFEKVFEDYDLVVGPTTPTTAFKLGDKGTDPVTMYMNDILTIPANMAGLPAMSVPAGLVDGMPVGLQIIGKAFDEESVYRAGYAFEQATEFNKNVPSFKGGQA</sequence>
<reference key="1">
    <citation type="journal article" date="2005" name="Nat. Biotechnol.">
        <title>The complete genome sequence of the meat-borne lactic acid bacterium Lactobacillus sakei 23K.</title>
        <authorList>
            <person name="Chaillou S."/>
            <person name="Champomier-Verges M.-C."/>
            <person name="Cornet M."/>
            <person name="Crutz-Le Coq A.-M."/>
            <person name="Dudez A.-M."/>
            <person name="Martin V."/>
            <person name="Beaufils S."/>
            <person name="Darbon-Rongere E."/>
            <person name="Bossy R."/>
            <person name="Loux V."/>
            <person name="Zagorec M."/>
        </authorList>
    </citation>
    <scope>NUCLEOTIDE SEQUENCE [LARGE SCALE GENOMIC DNA]</scope>
    <source>
        <strain>23K</strain>
    </source>
</reference>
<feature type="chain" id="PRO_0000241112" description="Glutamyl-tRNA(Gln) amidotransferase subunit A">
    <location>
        <begin position="1"/>
        <end position="488"/>
    </location>
</feature>
<feature type="active site" description="Charge relay system" evidence="1">
    <location>
        <position position="77"/>
    </location>
</feature>
<feature type="active site" description="Charge relay system" evidence="1">
    <location>
        <position position="152"/>
    </location>
</feature>
<feature type="active site" description="Acyl-ester intermediate" evidence="1">
    <location>
        <position position="176"/>
    </location>
</feature>